<sequence>MKQTVYIASPESQQIHVWNLNHEGALTLTQVVDVPGQVQPMVVSPDKRYLYVGVRPEFRVLAYRIAPDDGALTFAAESALPGSPTHISTDHQGQFVFVGSYNAGNVSVTRLEDGLPVGVVDVVEGLDGCHSANISPDNRTLWVPALKQDRICLFTVSDDGHLVAQDPAEVTTVEGAGPRHMVFHPNEQYAYCVNELNSSVDVWELKDPHGNIECVQTLDMMPENFSDTRWAADIHITPDGRHLYACDRTASLITVFSVSEDGSVLSKEGFQPTETQPRGFNVDHSGKYLIAAGQKSHHISVYEIVGEQGLLHEKGRYAVGQGPMWVVVNAH</sequence>
<keyword id="KW-0007">Acetylation</keyword>
<keyword id="KW-0119">Carbohydrate metabolism</keyword>
<keyword id="KW-0313">Glucose metabolism</keyword>
<keyword id="KW-0378">Hydrolase</keyword>
<name>6PGL_ECOHS</name>
<dbReference type="EC" id="3.1.1.31" evidence="1"/>
<dbReference type="EMBL" id="CP000802">
    <property type="protein sequence ID" value="ABV05177.1"/>
    <property type="molecule type" value="Genomic_DNA"/>
</dbReference>
<dbReference type="RefSeq" id="WP_000815435.1">
    <property type="nucleotide sequence ID" value="NC_009800.1"/>
</dbReference>
<dbReference type="SMR" id="A7ZY23"/>
<dbReference type="GeneID" id="86945650"/>
<dbReference type="KEGG" id="ecx:EcHS_A0821"/>
<dbReference type="HOGENOM" id="CLU_038716_2_0_6"/>
<dbReference type="UniPathway" id="UPA00115">
    <property type="reaction ID" value="UER00409"/>
</dbReference>
<dbReference type="GO" id="GO:0005829">
    <property type="term" value="C:cytosol"/>
    <property type="evidence" value="ECO:0007669"/>
    <property type="project" value="TreeGrafter"/>
</dbReference>
<dbReference type="GO" id="GO:0017057">
    <property type="term" value="F:6-phosphogluconolactonase activity"/>
    <property type="evidence" value="ECO:0007669"/>
    <property type="project" value="UniProtKB-UniRule"/>
</dbReference>
<dbReference type="GO" id="GO:0006006">
    <property type="term" value="P:glucose metabolic process"/>
    <property type="evidence" value="ECO:0007669"/>
    <property type="project" value="UniProtKB-KW"/>
</dbReference>
<dbReference type="GO" id="GO:0009051">
    <property type="term" value="P:pentose-phosphate shunt, oxidative branch"/>
    <property type="evidence" value="ECO:0007669"/>
    <property type="project" value="UniProtKB-UniRule"/>
</dbReference>
<dbReference type="FunFam" id="2.130.10.10:FF:000051">
    <property type="entry name" value="6-phosphogluconolactonase"/>
    <property type="match status" value="1"/>
</dbReference>
<dbReference type="Gene3D" id="2.130.10.10">
    <property type="entry name" value="YVTN repeat-like/Quinoprotein amine dehydrogenase"/>
    <property type="match status" value="1"/>
</dbReference>
<dbReference type="HAMAP" id="MF_01605">
    <property type="entry name" value="6P_gluconolactonase"/>
    <property type="match status" value="1"/>
</dbReference>
<dbReference type="InterPro" id="IPR022528">
    <property type="entry name" value="6-phosphogluconolactonase_YbhE"/>
</dbReference>
<dbReference type="InterPro" id="IPR050282">
    <property type="entry name" value="Cycloisomerase_2"/>
</dbReference>
<dbReference type="InterPro" id="IPR019405">
    <property type="entry name" value="Lactonase_7-beta_prop"/>
</dbReference>
<dbReference type="InterPro" id="IPR011045">
    <property type="entry name" value="N2O_reductase_N"/>
</dbReference>
<dbReference type="InterPro" id="IPR015943">
    <property type="entry name" value="WD40/YVTN_repeat-like_dom_sf"/>
</dbReference>
<dbReference type="NCBIfam" id="NF008258">
    <property type="entry name" value="PRK11028.1"/>
    <property type="match status" value="1"/>
</dbReference>
<dbReference type="PANTHER" id="PTHR30344:SF1">
    <property type="entry name" value="6-PHOSPHOGLUCONOLACTONASE"/>
    <property type="match status" value="1"/>
</dbReference>
<dbReference type="PANTHER" id="PTHR30344">
    <property type="entry name" value="6-PHOSPHOGLUCONOLACTONASE-RELATED"/>
    <property type="match status" value="1"/>
</dbReference>
<dbReference type="Pfam" id="PF10282">
    <property type="entry name" value="Lactonase"/>
    <property type="match status" value="1"/>
</dbReference>
<dbReference type="SUPFAM" id="SSF50974">
    <property type="entry name" value="Nitrous oxide reductase, N-terminal domain"/>
    <property type="match status" value="1"/>
</dbReference>
<proteinExistence type="inferred from homology"/>
<evidence type="ECO:0000255" key="1">
    <source>
        <dbReference type="HAMAP-Rule" id="MF_01605"/>
    </source>
</evidence>
<reference key="1">
    <citation type="journal article" date="2008" name="J. Bacteriol.">
        <title>The pangenome structure of Escherichia coli: comparative genomic analysis of E. coli commensal and pathogenic isolates.</title>
        <authorList>
            <person name="Rasko D.A."/>
            <person name="Rosovitz M.J."/>
            <person name="Myers G.S.A."/>
            <person name="Mongodin E.F."/>
            <person name="Fricke W.F."/>
            <person name="Gajer P."/>
            <person name="Crabtree J."/>
            <person name="Sebaihia M."/>
            <person name="Thomson N.R."/>
            <person name="Chaudhuri R."/>
            <person name="Henderson I.R."/>
            <person name="Sperandio V."/>
            <person name="Ravel J."/>
        </authorList>
    </citation>
    <scope>NUCLEOTIDE SEQUENCE [LARGE SCALE GENOMIC DNA]</scope>
    <source>
        <strain>HS</strain>
    </source>
</reference>
<gene>
    <name evidence="1" type="primary">pgl</name>
    <name type="ordered locus">EcHS_A0821</name>
</gene>
<comment type="function">
    <text evidence="1">Catalyzes the hydrolysis of 6-phosphogluconolactone to 6-phosphogluconate.</text>
</comment>
<comment type="catalytic activity">
    <reaction evidence="1">
        <text>6-phospho-D-glucono-1,5-lactone + H2O = 6-phospho-D-gluconate + H(+)</text>
        <dbReference type="Rhea" id="RHEA:12556"/>
        <dbReference type="ChEBI" id="CHEBI:15377"/>
        <dbReference type="ChEBI" id="CHEBI:15378"/>
        <dbReference type="ChEBI" id="CHEBI:57955"/>
        <dbReference type="ChEBI" id="CHEBI:58759"/>
        <dbReference type="EC" id="3.1.1.31"/>
    </reaction>
</comment>
<comment type="pathway">
    <text evidence="1">Carbohydrate degradation; pentose phosphate pathway; D-ribulose 5-phosphate from D-glucose 6-phosphate (oxidative stage): step 2/3.</text>
</comment>
<comment type="similarity">
    <text evidence="1">Belongs to the cycloisomerase 2 family.</text>
</comment>
<accession>A7ZY23</accession>
<protein>
    <recommendedName>
        <fullName evidence="1">6-phosphogluconolactonase</fullName>
        <shortName evidence="1">6-P-gluconolactonase</shortName>
        <ecNumber evidence="1">3.1.1.31</ecNumber>
    </recommendedName>
</protein>
<feature type="chain" id="PRO_1000069409" description="6-phosphogluconolactonase">
    <location>
        <begin position="1"/>
        <end position="331"/>
    </location>
</feature>
<feature type="modified residue" description="N6-acetyllysine" evidence="1">
    <location>
        <position position="287"/>
    </location>
</feature>
<organism>
    <name type="scientific">Escherichia coli O9:H4 (strain HS)</name>
    <dbReference type="NCBI Taxonomy" id="331112"/>
    <lineage>
        <taxon>Bacteria</taxon>
        <taxon>Pseudomonadati</taxon>
        <taxon>Pseudomonadota</taxon>
        <taxon>Gammaproteobacteria</taxon>
        <taxon>Enterobacterales</taxon>
        <taxon>Enterobacteriaceae</taxon>
        <taxon>Escherichia</taxon>
    </lineage>
</organism>